<comment type="function">
    <text evidence="1">Is the main repressor of the genes involved in the de novo synthesis of purine nucleotides, regulating purB, purC, purEK, purF, purHD, purL, purMN and guaBA expression. PurR is allosterically activated to bind its cognate DNA by binding the purine corepressors, hypoxanthine or guanine, thereby effecting transcription repression.</text>
</comment>
<comment type="pathway">
    <text>Purine metabolism; purine nucleotide biosynthesis [regulation].</text>
</comment>
<comment type="subunit">
    <text evidence="1">Homodimer.</text>
</comment>
<comment type="domain">
    <text evidence="1">Consists of two structural and functional domains: an N-terminal DNA-binding domain, approximately the first 60 residues, and a larger C-terminal domain, approximately 280 residues, which imparts the function of corepressor binding and oligomerization.</text>
</comment>
<sequence>MATIKDVAKRANVSTTTVSHVINKTRFVAEETRNAVWAAIKELHYSPSAVARSLKVNHTKSIGLLATSSEAAYFAEIIEAVEKNCFQKGYTLILGNAWNNLEKQRAYLSMMAQKRVDGLLVMCSEYPEPLLAMLEEYRHIPMVVMDWGEAKADFTDAVIDNAFEGGYMAGRYLIERGHREIGVIPGPLERNTGAGRLAGFMKAMEEAMIKVPESWIVQGDFEPESGYRAMQQILSQPHRPTAVFCGGDIMAMGALCAADEMGLRVPQDVSLIGYDNVRNARYFTPALTTIHQPKDSLGETAFNMLLDRIVNKREEPQSIEVHPRLIERRSVADGPFRDYRR</sequence>
<gene>
    <name evidence="1" type="primary">purR</name>
    <name type="ordered locus">EcSMS35_1538</name>
</gene>
<evidence type="ECO:0000255" key="1">
    <source>
        <dbReference type="HAMAP-Rule" id="MF_01277"/>
    </source>
</evidence>
<proteinExistence type="inferred from homology"/>
<name>PURR_ECOSM</name>
<protein>
    <recommendedName>
        <fullName evidence="1">HTH-type transcriptional repressor PurR</fullName>
    </recommendedName>
    <alternativeName>
        <fullName evidence="1">Pur regulon repressor</fullName>
    </alternativeName>
    <alternativeName>
        <fullName evidence="1">Purine nucleotide synthesis repressor</fullName>
    </alternativeName>
</protein>
<reference key="1">
    <citation type="journal article" date="2008" name="J. Bacteriol.">
        <title>Insights into the environmental resistance gene pool from the genome sequence of the multidrug-resistant environmental isolate Escherichia coli SMS-3-5.</title>
        <authorList>
            <person name="Fricke W.F."/>
            <person name="Wright M.S."/>
            <person name="Lindell A.H."/>
            <person name="Harkins D.M."/>
            <person name="Baker-Austin C."/>
            <person name="Ravel J."/>
            <person name="Stepanauskas R."/>
        </authorList>
    </citation>
    <scope>NUCLEOTIDE SEQUENCE [LARGE SCALE GENOMIC DNA]</scope>
    <source>
        <strain>SMS-3-5 / SECEC</strain>
    </source>
</reference>
<organism>
    <name type="scientific">Escherichia coli (strain SMS-3-5 / SECEC)</name>
    <dbReference type="NCBI Taxonomy" id="439855"/>
    <lineage>
        <taxon>Bacteria</taxon>
        <taxon>Pseudomonadati</taxon>
        <taxon>Pseudomonadota</taxon>
        <taxon>Gammaproteobacteria</taxon>
        <taxon>Enterobacterales</taxon>
        <taxon>Enterobacteriaceae</taxon>
        <taxon>Escherichia</taxon>
    </lineage>
</organism>
<feature type="chain" id="PRO_1000140292" description="HTH-type transcriptional repressor PurR">
    <location>
        <begin position="1"/>
        <end position="341"/>
    </location>
</feature>
<feature type="domain" description="HTH lacI-type" evidence="1">
    <location>
        <begin position="2"/>
        <end position="56"/>
    </location>
</feature>
<feature type="DNA-binding region" description="H-T-H motif" evidence="1">
    <location>
        <begin position="4"/>
        <end position="23"/>
    </location>
</feature>
<feature type="DNA-binding region" evidence="1">
    <location>
        <begin position="48"/>
        <end position="56"/>
    </location>
</feature>
<feature type="binding site" evidence="1">
    <location>
        <position position="73"/>
    </location>
    <ligand>
        <name>hypoxanthine</name>
        <dbReference type="ChEBI" id="CHEBI:17368"/>
    </ligand>
</feature>
<feature type="binding site" evidence="1">
    <location>
        <position position="190"/>
    </location>
    <ligand>
        <name>hypoxanthine</name>
        <dbReference type="ChEBI" id="CHEBI:17368"/>
    </ligand>
</feature>
<feature type="binding site" evidence="1">
    <location>
        <position position="192"/>
    </location>
    <ligand>
        <name>hypoxanthine</name>
        <dbReference type="ChEBI" id="CHEBI:17368"/>
    </ligand>
</feature>
<feature type="binding site" evidence="1">
    <location>
        <position position="221"/>
    </location>
    <ligand>
        <name>hypoxanthine</name>
        <dbReference type="ChEBI" id="CHEBI:17368"/>
    </ligand>
</feature>
<feature type="binding site" evidence="1">
    <location>
        <position position="275"/>
    </location>
    <ligand>
        <name>hypoxanthine</name>
        <dbReference type="ChEBI" id="CHEBI:17368"/>
    </ligand>
</feature>
<keyword id="KW-0238">DNA-binding</keyword>
<keyword id="KW-0658">Purine biosynthesis</keyword>
<keyword id="KW-0678">Repressor</keyword>
<keyword id="KW-0804">Transcription</keyword>
<keyword id="KW-0805">Transcription regulation</keyword>
<accession>B1LEM6</accession>
<dbReference type="EMBL" id="CP000970">
    <property type="protein sequence ID" value="ACB19070.1"/>
    <property type="molecule type" value="Genomic_DNA"/>
</dbReference>
<dbReference type="RefSeq" id="WP_000190982.1">
    <property type="nucleotide sequence ID" value="NC_010498.1"/>
</dbReference>
<dbReference type="SMR" id="B1LEM6"/>
<dbReference type="GeneID" id="75204504"/>
<dbReference type="KEGG" id="ecm:EcSMS35_1538"/>
<dbReference type="HOGENOM" id="CLU_037628_6_2_6"/>
<dbReference type="UniPathway" id="UPA00488"/>
<dbReference type="Proteomes" id="UP000007011">
    <property type="component" value="Chromosome"/>
</dbReference>
<dbReference type="GO" id="GO:0003700">
    <property type="term" value="F:DNA-binding transcription factor activity"/>
    <property type="evidence" value="ECO:0007669"/>
    <property type="project" value="TreeGrafter"/>
</dbReference>
<dbReference type="GO" id="GO:0000976">
    <property type="term" value="F:transcription cis-regulatory region binding"/>
    <property type="evidence" value="ECO:0007669"/>
    <property type="project" value="TreeGrafter"/>
</dbReference>
<dbReference type="GO" id="GO:0045892">
    <property type="term" value="P:negative regulation of DNA-templated transcription"/>
    <property type="evidence" value="ECO:0007669"/>
    <property type="project" value="UniProtKB-UniRule"/>
</dbReference>
<dbReference type="GO" id="GO:0006164">
    <property type="term" value="P:purine nucleotide biosynthetic process"/>
    <property type="evidence" value="ECO:0007669"/>
    <property type="project" value="UniProtKB-UniPathway"/>
</dbReference>
<dbReference type="CDD" id="cd01392">
    <property type="entry name" value="HTH_LacI"/>
    <property type="match status" value="1"/>
</dbReference>
<dbReference type="CDD" id="cd06275">
    <property type="entry name" value="PBP1_PurR"/>
    <property type="match status" value="1"/>
</dbReference>
<dbReference type="FunFam" id="1.10.260.40:FF:000002">
    <property type="entry name" value="HTH-type transcriptional repressor PurR"/>
    <property type="match status" value="1"/>
</dbReference>
<dbReference type="FunFam" id="3.40.50.2300:FF:000045">
    <property type="entry name" value="HTH-type transcriptional repressor PurR"/>
    <property type="match status" value="1"/>
</dbReference>
<dbReference type="Gene3D" id="3.40.50.2300">
    <property type="match status" value="2"/>
</dbReference>
<dbReference type="Gene3D" id="1.10.260.40">
    <property type="entry name" value="lambda repressor-like DNA-binding domains"/>
    <property type="match status" value="1"/>
</dbReference>
<dbReference type="HAMAP" id="MF_01277">
    <property type="entry name" value="HTH_type_PurR"/>
    <property type="match status" value="1"/>
</dbReference>
<dbReference type="InterPro" id="IPR000843">
    <property type="entry name" value="HTH_LacI"/>
</dbReference>
<dbReference type="InterPro" id="IPR046335">
    <property type="entry name" value="LacI/GalR-like_sensor"/>
</dbReference>
<dbReference type="InterPro" id="IPR010982">
    <property type="entry name" value="Lambda_DNA-bd_dom_sf"/>
</dbReference>
<dbReference type="InterPro" id="IPR028082">
    <property type="entry name" value="Peripla_BP_I"/>
</dbReference>
<dbReference type="InterPro" id="IPR023588">
    <property type="entry name" value="Tscrpt_reg_HTH_PurR"/>
</dbReference>
<dbReference type="NCBIfam" id="NF007979">
    <property type="entry name" value="PRK10703.1"/>
    <property type="match status" value="1"/>
</dbReference>
<dbReference type="PANTHER" id="PTHR30146:SF148">
    <property type="entry name" value="HTH-TYPE TRANSCRIPTIONAL REPRESSOR PURR-RELATED"/>
    <property type="match status" value="1"/>
</dbReference>
<dbReference type="PANTHER" id="PTHR30146">
    <property type="entry name" value="LACI-RELATED TRANSCRIPTIONAL REPRESSOR"/>
    <property type="match status" value="1"/>
</dbReference>
<dbReference type="Pfam" id="PF00356">
    <property type="entry name" value="LacI"/>
    <property type="match status" value="1"/>
</dbReference>
<dbReference type="Pfam" id="PF13377">
    <property type="entry name" value="Peripla_BP_3"/>
    <property type="match status" value="1"/>
</dbReference>
<dbReference type="PRINTS" id="PR00036">
    <property type="entry name" value="HTHLACI"/>
</dbReference>
<dbReference type="SMART" id="SM00354">
    <property type="entry name" value="HTH_LACI"/>
    <property type="match status" value="1"/>
</dbReference>
<dbReference type="SUPFAM" id="SSF47413">
    <property type="entry name" value="lambda repressor-like DNA-binding domains"/>
    <property type="match status" value="1"/>
</dbReference>
<dbReference type="SUPFAM" id="SSF53822">
    <property type="entry name" value="Periplasmic binding protein-like I"/>
    <property type="match status" value="1"/>
</dbReference>
<dbReference type="PROSITE" id="PS00356">
    <property type="entry name" value="HTH_LACI_1"/>
    <property type="match status" value="1"/>
</dbReference>
<dbReference type="PROSITE" id="PS50932">
    <property type="entry name" value="HTH_LACI_2"/>
    <property type="match status" value="1"/>
</dbReference>